<keyword id="KW-0963">Cytoplasm</keyword>
<keyword id="KW-0570">Pentose shunt</keyword>
<keyword id="KW-0704">Schiff base</keyword>
<keyword id="KW-0808">Transferase</keyword>
<dbReference type="EC" id="2.2.1.2" evidence="2"/>
<dbReference type="EMBL" id="AP008231">
    <property type="protein sequence ID" value="BAD79993.1"/>
    <property type="molecule type" value="Genomic_DNA"/>
</dbReference>
<dbReference type="RefSeq" id="WP_011244113.1">
    <property type="nucleotide sequence ID" value="NC_006576.1"/>
</dbReference>
<dbReference type="SMR" id="Q5N127"/>
<dbReference type="KEGG" id="syc:syc1803_d"/>
<dbReference type="eggNOG" id="COG0176">
    <property type="taxonomic scope" value="Bacteria"/>
</dbReference>
<dbReference type="UniPathway" id="UPA00115">
    <property type="reaction ID" value="UER00414"/>
</dbReference>
<dbReference type="Proteomes" id="UP000001175">
    <property type="component" value="Chromosome"/>
</dbReference>
<dbReference type="GO" id="GO:0005737">
    <property type="term" value="C:cytoplasm"/>
    <property type="evidence" value="ECO:0007669"/>
    <property type="project" value="UniProtKB-SubCell"/>
</dbReference>
<dbReference type="GO" id="GO:0005509">
    <property type="term" value="F:calcium ion binding"/>
    <property type="evidence" value="ECO:0007669"/>
    <property type="project" value="InterPro"/>
</dbReference>
<dbReference type="GO" id="GO:0004801">
    <property type="term" value="F:transaldolase activity"/>
    <property type="evidence" value="ECO:0000250"/>
    <property type="project" value="UniProtKB"/>
</dbReference>
<dbReference type="GO" id="GO:0005975">
    <property type="term" value="P:carbohydrate metabolic process"/>
    <property type="evidence" value="ECO:0007669"/>
    <property type="project" value="InterPro"/>
</dbReference>
<dbReference type="GO" id="GO:0006098">
    <property type="term" value="P:pentose-phosphate shunt"/>
    <property type="evidence" value="ECO:0007669"/>
    <property type="project" value="UniProtKB-UniRule"/>
</dbReference>
<dbReference type="CDD" id="cd00051">
    <property type="entry name" value="EFh"/>
    <property type="match status" value="1"/>
</dbReference>
<dbReference type="CDD" id="cd00957">
    <property type="entry name" value="Transaldolase_TalAB"/>
    <property type="match status" value="1"/>
</dbReference>
<dbReference type="FunFam" id="3.20.20.70:FF:000002">
    <property type="entry name" value="Transaldolase"/>
    <property type="match status" value="1"/>
</dbReference>
<dbReference type="Gene3D" id="3.20.20.70">
    <property type="entry name" value="Aldolase class I"/>
    <property type="match status" value="1"/>
</dbReference>
<dbReference type="Gene3D" id="1.10.238.10">
    <property type="entry name" value="EF-hand"/>
    <property type="match status" value="1"/>
</dbReference>
<dbReference type="HAMAP" id="MF_00492">
    <property type="entry name" value="Transaldolase_1"/>
    <property type="match status" value="1"/>
</dbReference>
<dbReference type="InterPro" id="IPR013785">
    <property type="entry name" value="Aldolase_TIM"/>
</dbReference>
<dbReference type="InterPro" id="IPR011992">
    <property type="entry name" value="EF-hand-dom_pair"/>
</dbReference>
<dbReference type="InterPro" id="IPR018247">
    <property type="entry name" value="EF_Hand_1_Ca_BS"/>
</dbReference>
<dbReference type="InterPro" id="IPR002048">
    <property type="entry name" value="EF_hand_dom"/>
</dbReference>
<dbReference type="InterPro" id="IPR001585">
    <property type="entry name" value="TAL/FSA"/>
</dbReference>
<dbReference type="InterPro" id="IPR004730">
    <property type="entry name" value="Transaldolase_1"/>
</dbReference>
<dbReference type="InterPro" id="IPR018225">
    <property type="entry name" value="Transaldolase_AS"/>
</dbReference>
<dbReference type="NCBIfam" id="NF008965">
    <property type="entry name" value="PRK12309.1"/>
    <property type="match status" value="1"/>
</dbReference>
<dbReference type="NCBIfam" id="TIGR00874">
    <property type="entry name" value="talAB"/>
    <property type="match status" value="1"/>
</dbReference>
<dbReference type="PANTHER" id="PTHR10683">
    <property type="entry name" value="TRANSALDOLASE"/>
    <property type="match status" value="1"/>
</dbReference>
<dbReference type="PANTHER" id="PTHR10683:SF18">
    <property type="entry name" value="TRANSALDOLASE"/>
    <property type="match status" value="1"/>
</dbReference>
<dbReference type="Pfam" id="PF13202">
    <property type="entry name" value="EF-hand_5"/>
    <property type="match status" value="2"/>
</dbReference>
<dbReference type="Pfam" id="PF00923">
    <property type="entry name" value="TAL_FSA"/>
    <property type="match status" value="1"/>
</dbReference>
<dbReference type="SUPFAM" id="SSF51569">
    <property type="entry name" value="Aldolase"/>
    <property type="match status" value="1"/>
</dbReference>
<dbReference type="SUPFAM" id="SSF47473">
    <property type="entry name" value="EF-hand"/>
    <property type="match status" value="1"/>
</dbReference>
<dbReference type="PROSITE" id="PS01054">
    <property type="entry name" value="TRANSALDOLASE_1"/>
    <property type="match status" value="1"/>
</dbReference>
<dbReference type="PROSITE" id="PS00958">
    <property type="entry name" value="TRANSALDOLASE_2"/>
    <property type="match status" value="1"/>
</dbReference>
<evidence type="ECO:0000250" key="1"/>
<evidence type="ECO:0000255" key="2">
    <source>
        <dbReference type="HAMAP-Rule" id="MF_00492"/>
    </source>
</evidence>
<comment type="function">
    <text evidence="2">Transaldolase is important for the balance of metabolites in the pentose-phosphate pathway.</text>
</comment>
<comment type="catalytic activity">
    <reaction evidence="2">
        <text>D-sedoheptulose 7-phosphate + D-glyceraldehyde 3-phosphate = D-erythrose 4-phosphate + beta-D-fructose 6-phosphate</text>
        <dbReference type="Rhea" id="RHEA:17053"/>
        <dbReference type="ChEBI" id="CHEBI:16897"/>
        <dbReference type="ChEBI" id="CHEBI:57483"/>
        <dbReference type="ChEBI" id="CHEBI:57634"/>
        <dbReference type="ChEBI" id="CHEBI:59776"/>
        <dbReference type="EC" id="2.2.1.2"/>
    </reaction>
</comment>
<comment type="pathway">
    <text evidence="2">Carbohydrate degradation; pentose phosphate pathway; D-glyceraldehyde 3-phosphate and beta-D-fructose 6-phosphate from D-ribose 5-phosphate and D-xylulose 5-phosphate (non-oxidative stage): step 2/3.</text>
</comment>
<comment type="subunit">
    <text evidence="1">Homodimer.</text>
</comment>
<comment type="subcellular location">
    <subcellularLocation>
        <location evidence="2">Cytoplasm</location>
    </subcellularLocation>
</comment>
<comment type="similarity">
    <text evidence="2">Belongs to the transaldolase family. Type 1 subfamily.</text>
</comment>
<sequence>MAANLLEQLRGMTVVVADTGGIQSIATFTPRDATTNPSLITAAAQMPQYQSIIDDTLRQVRTELGAEAPVEAIVAEAIDELFVAFGLRILEIVPGRVSTEVDARLSYDTEATIAKARKLIGLYERAGIRRDRVLIKIASTWEGIRAAEVLEKEGIHCNLTLLFGFHQAVACAEAGVTLISPFVGRILDWYKKESGRDAFPGAEDPGVQSVTQIYNYYKKFGYATEVMGASFRNISEIIELAGCDLLTISPGLLEELRQTEALLERKLDPAIAESLELEQIHLDRDRFAELHQADRMANEKLDEGIRGFCKAIDTLEGLLKQRLAVLEGKAVFHHAAHEVFSVCDLDGDGFITREEWLGSDAVFDALDLNKDGKLNEEDLLAGLGATLQMAGRAVATV</sequence>
<reference key="1">
    <citation type="journal article" date="2007" name="Photosyn. Res.">
        <title>Complete nucleotide sequence of the freshwater unicellular cyanobacterium Synechococcus elongatus PCC 6301 chromosome: gene content and organization.</title>
        <authorList>
            <person name="Sugita C."/>
            <person name="Ogata K."/>
            <person name="Shikata M."/>
            <person name="Jikuya H."/>
            <person name="Takano J."/>
            <person name="Furumichi M."/>
            <person name="Kanehisa M."/>
            <person name="Omata T."/>
            <person name="Sugiura M."/>
            <person name="Sugita M."/>
        </authorList>
    </citation>
    <scope>NUCLEOTIDE SEQUENCE [LARGE SCALE GENOMIC DNA]</scope>
    <source>
        <strain>ATCC 27144 / PCC 6301 / SAUG 1402/1</strain>
    </source>
</reference>
<name>TAL_SYNP6</name>
<proteinExistence type="inferred from homology"/>
<feature type="chain" id="PRO_0000230975" description="Transaldolase">
    <location>
        <begin position="1"/>
        <end position="397"/>
    </location>
</feature>
<feature type="active site" description="Schiff-base intermediate with substrate" evidence="2">
    <location>
        <position position="136"/>
    </location>
</feature>
<gene>
    <name evidence="2" type="primary">tal</name>
    <name type="ordered locus">syc1803_d</name>
</gene>
<organism>
    <name type="scientific">Synechococcus sp. (strain ATCC 27144 / PCC 6301 / SAUG 1402/1)</name>
    <name type="common">Anacystis nidulans</name>
    <dbReference type="NCBI Taxonomy" id="269084"/>
    <lineage>
        <taxon>Bacteria</taxon>
        <taxon>Bacillati</taxon>
        <taxon>Cyanobacteriota</taxon>
        <taxon>Cyanophyceae</taxon>
        <taxon>Synechococcales</taxon>
        <taxon>Synechococcaceae</taxon>
        <taxon>Synechococcus</taxon>
    </lineage>
</organism>
<protein>
    <recommendedName>
        <fullName evidence="2">Transaldolase</fullName>
        <ecNumber evidence="2">2.2.1.2</ecNumber>
    </recommendedName>
</protein>
<accession>Q5N127</accession>